<dbReference type="EC" id="1.2.4.1"/>
<dbReference type="EMBL" id="M38017">
    <property type="protein sequence ID" value="AAA29379.1"/>
    <property type="molecule type" value="mRNA"/>
</dbReference>
<dbReference type="SMR" id="P26269"/>
<dbReference type="BioCyc" id="MetaCyc:MONOMER-18300"/>
<dbReference type="GO" id="GO:0005759">
    <property type="term" value="C:mitochondrial matrix"/>
    <property type="evidence" value="ECO:0007669"/>
    <property type="project" value="UniProtKB-SubCell"/>
</dbReference>
<dbReference type="GO" id="GO:0046872">
    <property type="term" value="F:metal ion binding"/>
    <property type="evidence" value="ECO:0007669"/>
    <property type="project" value="UniProtKB-KW"/>
</dbReference>
<dbReference type="GO" id="GO:0004739">
    <property type="term" value="F:pyruvate dehydrogenase (acetyl-transferring) activity"/>
    <property type="evidence" value="ECO:0007669"/>
    <property type="project" value="UniProtKB-EC"/>
</dbReference>
<dbReference type="GO" id="GO:0006006">
    <property type="term" value="P:glucose metabolic process"/>
    <property type="evidence" value="ECO:0007669"/>
    <property type="project" value="UniProtKB-KW"/>
</dbReference>
<dbReference type="GO" id="GO:0006086">
    <property type="term" value="P:pyruvate decarboxylation to acetyl-CoA"/>
    <property type="evidence" value="ECO:0007669"/>
    <property type="project" value="InterPro"/>
</dbReference>
<dbReference type="GO" id="GO:0006099">
    <property type="term" value="P:tricarboxylic acid cycle"/>
    <property type="evidence" value="ECO:0007669"/>
    <property type="project" value="UniProtKB-KW"/>
</dbReference>
<dbReference type="CDD" id="cd07036">
    <property type="entry name" value="TPP_PYR_E1-PDHc-beta_like"/>
    <property type="match status" value="1"/>
</dbReference>
<dbReference type="FunFam" id="3.40.50.920:FF:000001">
    <property type="entry name" value="Pyruvate dehydrogenase E1 beta subunit"/>
    <property type="match status" value="1"/>
</dbReference>
<dbReference type="FunFam" id="3.40.50.970:FF:000001">
    <property type="entry name" value="Pyruvate dehydrogenase E1 beta subunit"/>
    <property type="match status" value="1"/>
</dbReference>
<dbReference type="Gene3D" id="3.40.50.920">
    <property type="match status" value="1"/>
</dbReference>
<dbReference type="Gene3D" id="3.40.50.970">
    <property type="match status" value="1"/>
</dbReference>
<dbReference type="InterPro" id="IPR027110">
    <property type="entry name" value="PDHB_mito-type"/>
</dbReference>
<dbReference type="InterPro" id="IPR029061">
    <property type="entry name" value="THDP-binding"/>
</dbReference>
<dbReference type="InterPro" id="IPR009014">
    <property type="entry name" value="Transketo_C/PFOR_II"/>
</dbReference>
<dbReference type="InterPro" id="IPR005475">
    <property type="entry name" value="Transketolase-like_Pyr-bd"/>
</dbReference>
<dbReference type="InterPro" id="IPR033248">
    <property type="entry name" value="Transketolase_C"/>
</dbReference>
<dbReference type="NCBIfam" id="NF006667">
    <property type="entry name" value="PRK09212.1"/>
    <property type="match status" value="1"/>
</dbReference>
<dbReference type="NCBIfam" id="NF008854">
    <property type="entry name" value="PRK11892.1"/>
    <property type="match status" value="1"/>
</dbReference>
<dbReference type="PANTHER" id="PTHR11624">
    <property type="entry name" value="DEHYDROGENASE RELATED"/>
    <property type="match status" value="1"/>
</dbReference>
<dbReference type="PANTHER" id="PTHR11624:SF96">
    <property type="entry name" value="PYRUVATE DEHYDROGENASE E1 COMPONENT SUBUNIT BETA, MITOCHONDRIAL"/>
    <property type="match status" value="1"/>
</dbReference>
<dbReference type="Pfam" id="PF02779">
    <property type="entry name" value="Transket_pyr"/>
    <property type="match status" value="1"/>
</dbReference>
<dbReference type="Pfam" id="PF02780">
    <property type="entry name" value="Transketolase_C"/>
    <property type="match status" value="1"/>
</dbReference>
<dbReference type="SMART" id="SM00861">
    <property type="entry name" value="Transket_pyr"/>
    <property type="match status" value="1"/>
</dbReference>
<dbReference type="SUPFAM" id="SSF52518">
    <property type="entry name" value="Thiamin diphosphate-binding fold (THDP-binding)"/>
    <property type="match status" value="1"/>
</dbReference>
<dbReference type="SUPFAM" id="SSF52922">
    <property type="entry name" value="TK C-terminal domain-like"/>
    <property type="match status" value="1"/>
</dbReference>
<name>ODPB_ASCSU</name>
<evidence type="ECO:0000250" key="1"/>
<evidence type="ECO:0000250" key="2">
    <source>
        <dbReference type="UniProtKB" id="P11177"/>
    </source>
</evidence>
<evidence type="ECO:0000269" key="3">
    <source>
    </source>
</evidence>
<keyword id="KW-0119">Carbohydrate metabolism</keyword>
<keyword id="KW-0903">Direct protein sequencing</keyword>
<keyword id="KW-0313">Glucose metabolism</keyword>
<keyword id="KW-0479">Metal-binding</keyword>
<keyword id="KW-0496">Mitochondrion</keyword>
<keyword id="KW-0560">Oxidoreductase</keyword>
<keyword id="KW-0630">Potassium</keyword>
<keyword id="KW-0670">Pyruvate</keyword>
<keyword id="KW-0786">Thiamine pyrophosphate</keyword>
<keyword id="KW-0809">Transit peptide</keyword>
<keyword id="KW-0816">Tricarboxylic acid cycle</keyword>
<accession>P26269</accession>
<organism>
    <name type="scientific">Ascaris suum</name>
    <name type="common">Pig roundworm</name>
    <name type="synonym">Ascaris lumbricoides</name>
    <dbReference type="NCBI Taxonomy" id="6253"/>
    <lineage>
        <taxon>Eukaryota</taxon>
        <taxon>Metazoa</taxon>
        <taxon>Ecdysozoa</taxon>
        <taxon>Nematoda</taxon>
        <taxon>Chromadorea</taxon>
        <taxon>Rhabditida</taxon>
        <taxon>Spirurina</taxon>
        <taxon>Ascaridomorpha</taxon>
        <taxon>Ascaridoidea</taxon>
        <taxon>Ascarididae</taxon>
        <taxon>Ascaris</taxon>
    </lineage>
</organism>
<proteinExistence type="evidence at protein level"/>
<protein>
    <recommendedName>
        <fullName>Pyruvate dehydrogenase E1 component subunit beta, mitochondrial</fullName>
        <shortName>PDHE1-B</shortName>
        <ecNumber>1.2.4.1</ecNumber>
    </recommendedName>
</protein>
<reference key="1">
    <citation type="journal article" date="1991" name="Mol. Biochem. Parasitol.">
        <title>Characterization of cDNA clones for the beta subunit of pyruvate dehydrogenase from Ascaris suum.</title>
        <authorList>
            <person name="Wheelock M.J."/>
            <person name="Komuniecki R."/>
            <person name="Duran E."/>
            <person name="Johnson K.R."/>
        </authorList>
    </citation>
    <scope>NUCLEOTIDE SEQUENCE [MRNA]</scope>
    <scope>PROTEIN SEQUENCE OF 28-42</scope>
</reference>
<sequence length="361" mass="39136">MAVNGCMRLLRNGLTSACALEQSVRRLASGTLNVTVRDALNAALDEEIKRDDRVFLIGEEVAQYDGAYKISKGLWKKYGDGRIWDTPITEMAIAGLSVGAAMNGLRPICEFMSMNFSMQGIDHIINSAAKAHYMSAGRFHVPIVFRGANGAAVGVAQQHSQDFTAWFMHCPGVKVVVPYDCEDARGLLKAAVRDDNPVICLENEILYGMKFPVSPEAQSPDFVLPFGQAKIQRPGKDITIVSLSIGVDVSLHAADELAKSGIDCEVINLRCVRPLDFQTVKDSVIKTKHLVTVESGWPNCGVGAEISARVTESDAFGYLDGPILRVTGVDVPMPYAQPLETAALPQPADVVKMVKKCLNVQ</sequence>
<feature type="transit peptide" description="Mitochondrion" evidence="3">
    <location>
        <begin position="1"/>
        <end position="27"/>
    </location>
</feature>
<feature type="chain" id="PRO_0000020456" description="Pyruvate dehydrogenase E1 component subunit beta, mitochondrial">
    <location>
        <begin position="28"/>
        <end position="361"/>
    </location>
</feature>
<feature type="binding site" evidence="2">
    <location>
        <position position="90"/>
    </location>
    <ligand>
        <name>thiamine diphosphate</name>
        <dbReference type="ChEBI" id="CHEBI:58937"/>
        <note>ligand shared with alpha subunit</note>
    </ligand>
</feature>
<feature type="binding site" evidence="2">
    <location>
        <position position="143"/>
    </location>
    <ligand>
        <name>K(+)</name>
        <dbReference type="ChEBI" id="CHEBI:29103"/>
        <note>structural</note>
    </ligand>
</feature>
<feature type="binding site" evidence="2">
    <location>
        <position position="191"/>
    </location>
    <ligand>
        <name>K(+)</name>
        <dbReference type="ChEBI" id="CHEBI:29103"/>
        <note>structural</note>
    </ligand>
</feature>
<feature type="binding site" evidence="2">
    <location>
        <position position="192"/>
    </location>
    <ligand>
        <name>K(+)</name>
        <dbReference type="ChEBI" id="CHEBI:29103"/>
        <note>structural</note>
    </ligand>
</feature>
<feature type="binding site" evidence="2">
    <location>
        <position position="194"/>
    </location>
    <ligand>
        <name>K(+)</name>
        <dbReference type="ChEBI" id="CHEBI:29103"/>
        <note>structural</note>
    </ligand>
</feature>
<feature type="binding site" evidence="2">
    <location>
        <position position="196"/>
    </location>
    <ligand>
        <name>K(+)</name>
        <dbReference type="ChEBI" id="CHEBI:29103"/>
        <note>structural</note>
    </ligand>
</feature>
<comment type="function">
    <text>The pyruvate dehydrogenase complex catalyzes the overall conversion of pyruvate to acetyl-CoA and CO(2), and thereby links the glycolytic pathway to the tricarboxylic cycle.</text>
</comment>
<comment type="catalytic activity">
    <reaction>
        <text>N(6)-[(R)-lipoyl]-L-lysyl-[protein] + pyruvate + H(+) = N(6)-[(R)-S(8)-acetyldihydrolipoyl]-L-lysyl-[protein] + CO2</text>
        <dbReference type="Rhea" id="RHEA:19189"/>
        <dbReference type="Rhea" id="RHEA-COMP:10474"/>
        <dbReference type="Rhea" id="RHEA-COMP:10478"/>
        <dbReference type="ChEBI" id="CHEBI:15361"/>
        <dbReference type="ChEBI" id="CHEBI:15378"/>
        <dbReference type="ChEBI" id="CHEBI:16526"/>
        <dbReference type="ChEBI" id="CHEBI:83099"/>
        <dbReference type="ChEBI" id="CHEBI:83111"/>
        <dbReference type="EC" id="1.2.4.1"/>
    </reaction>
</comment>
<comment type="cofactor">
    <cofactor evidence="2">
        <name>thiamine diphosphate</name>
        <dbReference type="ChEBI" id="CHEBI:58937"/>
    </cofactor>
</comment>
<comment type="subunit">
    <text evidence="1">Heterotetramer of two PDHA1 and two PDHB subunits. The heterotetramer interacts with DLAT, and is part of the multimeric pyruvate dehydrogenase complex that contains multiple copies of pyruvate dehydrogenase (E1), dihydrolipoamide acetyltransferase (DLAT, E2) and lipoamide dehydrogenase (DLD, E3) (By similarity).</text>
</comment>
<comment type="subcellular location">
    <subcellularLocation>
        <location>Mitochondrion matrix</location>
    </subcellularLocation>
</comment>